<feature type="chain" id="PRO_0000353748" description="Cytochrome c biogenesis protein CcsA">
    <location>
        <begin position="1"/>
        <end position="324"/>
    </location>
</feature>
<feature type="transmembrane region" description="Helical" evidence="1">
    <location>
        <begin position="15"/>
        <end position="35"/>
    </location>
</feature>
<feature type="transmembrane region" description="Helical" evidence="1">
    <location>
        <begin position="44"/>
        <end position="64"/>
    </location>
</feature>
<feature type="transmembrane region" description="Helical" evidence="1">
    <location>
        <begin position="71"/>
        <end position="91"/>
    </location>
</feature>
<feature type="transmembrane region" description="Helical" evidence="1">
    <location>
        <begin position="98"/>
        <end position="118"/>
    </location>
</feature>
<feature type="transmembrane region" description="Helical" evidence="1">
    <location>
        <begin position="143"/>
        <end position="163"/>
    </location>
</feature>
<feature type="transmembrane region" description="Helical" evidence="1">
    <location>
        <begin position="228"/>
        <end position="248"/>
    </location>
</feature>
<feature type="transmembrane region" description="Helical" evidence="1">
    <location>
        <begin position="255"/>
        <end position="275"/>
    </location>
</feature>
<feature type="transmembrane region" description="Helical" evidence="1">
    <location>
        <begin position="289"/>
        <end position="309"/>
    </location>
</feature>
<geneLocation type="chloroplast"/>
<gene>
    <name evidence="1" type="primary">ccsA</name>
</gene>
<sequence>MIFSTLEHILTHISFSIVCIVITIHLITLLIDEIIKLNNSSEKGMIATFLCITVLLVTRCIYSGHLPLSDLYESLIFLSWSLSFIHIVPYFKKNKSHLSTITASSVIFTQGFATSGLLTEIHQSAILVPALQSEWLIMHVSMMILGYAALLCGSLLSVALLVLTFRKNRNLLCKKNPLLLKLTEEFSFGEIQYINEINNIFGNASFFSDNNYYRSQLIQQLDYWSYRVISLGFIFLTIGILSGAVWANEAWGSYWNWDPKETWAFITWIVFAVYLHTRTNTNLQVENSAIVASMGFLIIWICYFGVNLLGIGLHTYGSFTLTSN</sequence>
<accession>Q0G9R3</accession>
<keyword id="KW-0150">Chloroplast</keyword>
<keyword id="KW-0201">Cytochrome c-type biogenesis</keyword>
<keyword id="KW-0472">Membrane</keyword>
<keyword id="KW-0934">Plastid</keyword>
<keyword id="KW-0793">Thylakoid</keyword>
<keyword id="KW-0812">Transmembrane</keyword>
<keyword id="KW-1133">Transmembrane helix</keyword>
<organism>
    <name type="scientific">Daucus carota</name>
    <name type="common">Wild carrot</name>
    <dbReference type="NCBI Taxonomy" id="4039"/>
    <lineage>
        <taxon>Eukaryota</taxon>
        <taxon>Viridiplantae</taxon>
        <taxon>Streptophyta</taxon>
        <taxon>Embryophyta</taxon>
        <taxon>Tracheophyta</taxon>
        <taxon>Spermatophyta</taxon>
        <taxon>Magnoliopsida</taxon>
        <taxon>eudicotyledons</taxon>
        <taxon>Gunneridae</taxon>
        <taxon>Pentapetalae</taxon>
        <taxon>asterids</taxon>
        <taxon>campanulids</taxon>
        <taxon>Apiales</taxon>
        <taxon>Apiaceae</taxon>
        <taxon>Apioideae</taxon>
        <taxon>Scandiceae</taxon>
        <taxon>Daucinae</taxon>
        <taxon>Daucus</taxon>
        <taxon>Daucus sect. Daucus</taxon>
    </lineage>
</organism>
<reference key="1">
    <citation type="journal article" date="2006" name="BMC Genomics">
        <title>Complete plastid genome sequence of Daucus carota: implications for biotechnology and phylogeny of angiosperms.</title>
        <authorList>
            <person name="Ruhlman T."/>
            <person name="Lee S.-B."/>
            <person name="Jansen R.K."/>
            <person name="Hostetler J.B."/>
            <person name="Tallon L.J."/>
            <person name="Town C.D."/>
            <person name="Daniell H."/>
        </authorList>
    </citation>
    <scope>NUCLEOTIDE SEQUENCE [LARGE SCALE GENOMIC DNA]</scope>
    <source>
        <strain>cv. Danvers Half-long</strain>
    </source>
</reference>
<evidence type="ECO:0000255" key="1">
    <source>
        <dbReference type="HAMAP-Rule" id="MF_01391"/>
    </source>
</evidence>
<name>CCSA_DAUCA</name>
<protein>
    <recommendedName>
        <fullName evidence="1">Cytochrome c biogenesis protein CcsA</fullName>
    </recommendedName>
</protein>
<comment type="function">
    <text evidence="1">Required during biogenesis of c-type cytochromes (cytochrome c6 and cytochrome f) at the step of heme attachment.</text>
</comment>
<comment type="subunit">
    <text evidence="1">May interact with Ccs1.</text>
</comment>
<comment type="subcellular location">
    <subcellularLocation>
        <location evidence="1">Plastid</location>
        <location evidence="1">Chloroplast thylakoid membrane</location>
        <topology evidence="1">Multi-pass membrane protein</topology>
    </subcellularLocation>
</comment>
<comment type="similarity">
    <text evidence="1">Belongs to the CcmF/CycK/Ccl1/NrfE/CcsA family.</text>
</comment>
<dbReference type="EMBL" id="DQ898156">
    <property type="protein sequence ID" value="ABI32473.1"/>
    <property type="molecule type" value="Genomic_DNA"/>
</dbReference>
<dbReference type="RefSeq" id="YP_740166.1">
    <property type="nucleotide sequence ID" value="NC_008325.1"/>
</dbReference>
<dbReference type="SMR" id="Q0G9R3"/>
<dbReference type="GeneID" id="4266809"/>
<dbReference type="OMA" id="YESLCFL"/>
<dbReference type="GO" id="GO:0009535">
    <property type="term" value="C:chloroplast thylakoid membrane"/>
    <property type="evidence" value="ECO:0007669"/>
    <property type="project" value="UniProtKB-SubCell"/>
</dbReference>
<dbReference type="GO" id="GO:0005886">
    <property type="term" value="C:plasma membrane"/>
    <property type="evidence" value="ECO:0007669"/>
    <property type="project" value="TreeGrafter"/>
</dbReference>
<dbReference type="GO" id="GO:0020037">
    <property type="term" value="F:heme binding"/>
    <property type="evidence" value="ECO:0007669"/>
    <property type="project" value="InterPro"/>
</dbReference>
<dbReference type="GO" id="GO:0017004">
    <property type="term" value="P:cytochrome complex assembly"/>
    <property type="evidence" value="ECO:0007669"/>
    <property type="project" value="UniProtKB-UniRule"/>
</dbReference>
<dbReference type="HAMAP" id="MF_01391">
    <property type="entry name" value="CytC_CcsA"/>
    <property type="match status" value="1"/>
</dbReference>
<dbReference type="InterPro" id="IPR002541">
    <property type="entry name" value="Cyt_c_assembly"/>
</dbReference>
<dbReference type="InterPro" id="IPR017562">
    <property type="entry name" value="Cyt_c_biogenesis_CcsA"/>
</dbReference>
<dbReference type="InterPro" id="IPR045062">
    <property type="entry name" value="Cyt_c_biogenesis_CcsA/CcmC"/>
</dbReference>
<dbReference type="NCBIfam" id="TIGR03144">
    <property type="entry name" value="cytochr_II_ccsB"/>
    <property type="match status" value="1"/>
</dbReference>
<dbReference type="PANTHER" id="PTHR30071:SF1">
    <property type="entry name" value="CYTOCHROME B_B6 PROTEIN-RELATED"/>
    <property type="match status" value="1"/>
</dbReference>
<dbReference type="PANTHER" id="PTHR30071">
    <property type="entry name" value="HEME EXPORTER PROTEIN C"/>
    <property type="match status" value="1"/>
</dbReference>
<dbReference type="Pfam" id="PF01578">
    <property type="entry name" value="Cytochrom_C_asm"/>
    <property type="match status" value="1"/>
</dbReference>
<proteinExistence type="inferred from homology"/>